<dbReference type="EC" id="6.3.4.20" evidence="1"/>
<dbReference type="EMBL" id="CP000526">
    <property type="protein sequence ID" value="ABM50582.1"/>
    <property type="molecule type" value="Genomic_DNA"/>
</dbReference>
<dbReference type="RefSeq" id="WP_004190026.1">
    <property type="nucleotide sequence ID" value="NC_008785.1"/>
</dbReference>
<dbReference type="SMR" id="A1V788"/>
<dbReference type="GeneID" id="93058685"/>
<dbReference type="KEGG" id="bmv:BMASAVP1_A2795"/>
<dbReference type="HOGENOM" id="CLU_081854_0_0_4"/>
<dbReference type="UniPathway" id="UPA00391"/>
<dbReference type="GO" id="GO:0005524">
    <property type="term" value="F:ATP binding"/>
    <property type="evidence" value="ECO:0007669"/>
    <property type="project" value="UniProtKB-UniRule"/>
</dbReference>
<dbReference type="GO" id="GO:0016879">
    <property type="term" value="F:ligase activity, forming carbon-nitrogen bonds"/>
    <property type="evidence" value="ECO:0007669"/>
    <property type="project" value="UniProtKB-UniRule"/>
</dbReference>
<dbReference type="GO" id="GO:0008270">
    <property type="term" value="F:zinc ion binding"/>
    <property type="evidence" value="ECO:0007669"/>
    <property type="project" value="UniProtKB-UniRule"/>
</dbReference>
<dbReference type="GO" id="GO:0008616">
    <property type="term" value="P:queuosine biosynthetic process"/>
    <property type="evidence" value="ECO:0007669"/>
    <property type="project" value="UniProtKB-UniRule"/>
</dbReference>
<dbReference type="CDD" id="cd01995">
    <property type="entry name" value="QueC-like"/>
    <property type="match status" value="1"/>
</dbReference>
<dbReference type="Gene3D" id="3.40.50.620">
    <property type="entry name" value="HUPs"/>
    <property type="match status" value="1"/>
</dbReference>
<dbReference type="HAMAP" id="MF_01633">
    <property type="entry name" value="QueC"/>
    <property type="match status" value="1"/>
</dbReference>
<dbReference type="InterPro" id="IPR018317">
    <property type="entry name" value="QueC"/>
</dbReference>
<dbReference type="InterPro" id="IPR014729">
    <property type="entry name" value="Rossmann-like_a/b/a_fold"/>
</dbReference>
<dbReference type="NCBIfam" id="TIGR00364">
    <property type="entry name" value="7-cyano-7-deazaguanine synthase QueC"/>
    <property type="match status" value="1"/>
</dbReference>
<dbReference type="PANTHER" id="PTHR42914">
    <property type="entry name" value="7-CYANO-7-DEAZAGUANINE SYNTHASE"/>
    <property type="match status" value="1"/>
</dbReference>
<dbReference type="PANTHER" id="PTHR42914:SF1">
    <property type="entry name" value="7-CYANO-7-DEAZAGUANINE SYNTHASE"/>
    <property type="match status" value="1"/>
</dbReference>
<dbReference type="Pfam" id="PF06508">
    <property type="entry name" value="QueC"/>
    <property type="match status" value="1"/>
</dbReference>
<dbReference type="PIRSF" id="PIRSF006293">
    <property type="entry name" value="ExsB"/>
    <property type="match status" value="1"/>
</dbReference>
<dbReference type="SUPFAM" id="SSF52402">
    <property type="entry name" value="Adenine nucleotide alpha hydrolases-like"/>
    <property type="match status" value="1"/>
</dbReference>
<gene>
    <name evidence="1" type="primary">queC</name>
    <name type="ordered locus">BMASAVP1_A2795</name>
</gene>
<reference key="1">
    <citation type="journal article" date="2010" name="Genome Biol. Evol.">
        <title>Continuing evolution of Burkholderia mallei through genome reduction and large-scale rearrangements.</title>
        <authorList>
            <person name="Losada L."/>
            <person name="Ronning C.M."/>
            <person name="DeShazer D."/>
            <person name="Woods D."/>
            <person name="Fedorova N."/>
            <person name="Kim H.S."/>
            <person name="Shabalina S.A."/>
            <person name="Pearson T.R."/>
            <person name="Brinkac L."/>
            <person name="Tan P."/>
            <person name="Nandi T."/>
            <person name="Crabtree J."/>
            <person name="Badger J."/>
            <person name="Beckstrom-Sternberg S."/>
            <person name="Saqib M."/>
            <person name="Schutzer S.E."/>
            <person name="Keim P."/>
            <person name="Nierman W.C."/>
        </authorList>
    </citation>
    <scope>NUCLEOTIDE SEQUENCE [LARGE SCALE GENOMIC DNA]</scope>
    <source>
        <strain>SAVP1</strain>
    </source>
</reference>
<protein>
    <recommendedName>
        <fullName evidence="1">7-cyano-7-deazaguanine synthase</fullName>
        <ecNumber evidence="1">6.3.4.20</ecNumber>
    </recommendedName>
    <alternativeName>
        <fullName evidence="1">7-cyano-7-carbaguanine synthase</fullName>
    </alternativeName>
    <alternativeName>
        <fullName evidence="1">PreQ(0) synthase</fullName>
    </alternativeName>
    <alternativeName>
        <fullName evidence="1">Queuosine biosynthesis protein QueC</fullName>
    </alternativeName>
</protein>
<organism>
    <name type="scientific">Burkholderia mallei (strain SAVP1)</name>
    <dbReference type="NCBI Taxonomy" id="320388"/>
    <lineage>
        <taxon>Bacteria</taxon>
        <taxon>Pseudomonadati</taxon>
        <taxon>Pseudomonadota</taxon>
        <taxon>Betaproteobacteria</taxon>
        <taxon>Burkholderiales</taxon>
        <taxon>Burkholderiaceae</taxon>
        <taxon>Burkholderia</taxon>
        <taxon>pseudomallei group</taxon>
    </lineage>
</organism>
<accession>A1V788</accession>
<evidence type="ECO:0000255" key="1">
    <source>
        <dbReference type="HAMAP-Rule" id="MF_01633"/>
    </source>
</evidence>
<sequence length="244" mass="27142">MIRTDAKDGALVLFSGGQDSATCVAWALERYQTVETLGFDYGQRHRVELECREGVRDALKRRFPQWSHKLGDDHLIDLSVLGSISDTAMTRAIEIETASNGLPNTFVPGRNLLFMTIAAAIAYRRGLRALVGGMCETDFSGYPDCRDDTMKALQVALNLGMDTRFVLETPLMWLDKADTWRLAEQLGGAPLVELIRVETHTCYVGERSELHDWGFGCGECPACKLRKRGYDAYLRGESVTEAPA</sequence>
<comment type="function">
    <text evidence="1">Catalyzes the ATP-dependent conversion of 7-carboxy-7-deazaguanine (CDG) to 7-cyano-7-deazaguanine (preQ(0)).</text>
</comment>
<comment type="catalytic activity">
    <reaction evidence="1">
        <text>7-carboxy-7-deazaguanine + NH4(+) + ATP = 7-cyano-7-deazaguanine + ADP + phosphate + H2O + H(+)</text>
        <dbReference type="Rhea" id="RHEA:27982"/>
        <dbReference type="ChEBI" id="CHEBI:15377"/>
        <dbReference type="ChEBI" id="CHEBI:15378"/>
        <dbReference type="ChEBI" id="CHEBI:28938"/>
        <dbReference type="ChEBI" id="CHEBI:30616"/>
        <dbReference type="ChEBI" id="CHEBI:43474"/>
        <dbReference type="ChEBI" id="CHEBI:45075"/>
        <dbReference type="ChEBI" id="CHEBI:61036"/>
        <dbReference type="ChEBI" id="CHEBI:456216"/>
        <dbReference type="EC" id="6.3.4.20"/>
    </reaction>
</comment>
<comment type="cofactor">
    <cofactor evidence="1">
        <name>Zn(2+)</name>
        <dbReference type="ChEBI" id="CHEBI:29105"/>
    </cofactor>
    <text evidence="1">Binds 1 zinc ion per subunit.</text>
</comment>
<comment type="pathway">
    <text evidence="1">Purine metabolism; 7-cyano-7-deazaguanine biosynthesis.</text>
</comment>
<comment type="similarity">
    <text evidence="1">Belongs to the QueC family.</text>
</comment>
<name>QUEC_BURMS</name>
<proteinExistence type="inferred from homology"/>
<keyword id="KW-0067">ATP-binding</keyword>
<keyword id="KW-0436">Ligase</keyword>
<keyword id="KW-0479">Metal-binding</keyword>
<keyword id="KW-0547">Nucleotide-binding</keyword>
<keyword id="KW-0671">Queuosine biosynthesis</keyword>
<keyword id="KW-0862">Zinc</keyword>
<feature type="chain" id="PRO_1000069756" description="7-cyano-7-deazaguanine synthase">
    <location>
        <begin position="1"/>
        <end position="244"/>
    </location>
</feature>
<feature type="binding site" evidence="1">
    <location>
        <begin position="14"/>
        <end position="24"/>
    </location>
    <ligand>
        <name>ATP</name>
        <dbReference type="ChEBI" id="CHEBI:30616"/>
    </ligand>
</feature>
<feature type="binding site" evidence="1">
    <location>
        <position position="202"/>
    </location>
    <ligand>
        <name>Zn(2+)</name>
        <dbReference type="ChEBI" id="CHEBI:29105"/>
    </ligand>
</feature>
<feature type="binding site" evidence="1">
    <location>
        <position position="217"/>
    </location>
    <ligand>
        <name>Zn(2+)</name>
        <dbReference type="ChEBI" id="CHEBI:29105"/>
    </ligand>
</feature>
<feature type="binding site" evidence="1">
    <location>
        <position position="220"/>
    </location>
    <ligand>
        <name>Zn(2+)</name>
        <dbReference type="ChEBI" id="CHEBI:29105"/>
    </ligand>
</feature>
<feature type="binding site" evidence="1">
    <location>
        <position position="223"/>
    </location>
    <ligand>
        <name>Zn(2+)</name>
        <dbReference type="ChEBI" id="CHEBI:29105"/>
    </ligand>
</feature>